<comment type="function">
    <text evidence="1">Involved in the TCA cycle. Catalyzes the stereospecific interconversion of fumarate to L-malate.</text>
</comment>
<comment type="catalytic activity">
    <reaction evidence="1">
        <text>(S)-malate = fumarate + H2O</text>
        <dbReference type="Rhea" id="RHEA:12460"/>
        <dbReference type="ChEBI" id="CHEBI:15377"/>
        <dbReference type="ChEBI" id="CHEBI:15589"/>
        <dbReference type="ChEBI" id="CHEBI:29806"/>
        <dbReference type="EC" id="4.2.1.2"/>
    </reaction>
</comment>
<comment type="pathway">
    <text evidence="1">Carbohydrate metabolism; tricarboxylic acid cycle; (S)-malate from fumarate: step 1/1.</text>
</comment>
<comment type="subunit">
    <text evidence="1">Homotetramer.</text>
</comment>
<comment type="subcellular location">
    <subcellularLocation>
        <location evidence="1">Cytoplasm</location>
    </subcellularLocation>
</comment>
<comment type="miscellaneous">
    <text evidence="1">There are 2 substrate-binding sites: the catalytic A site, and the non-catalytic B site that may play a role in the transfer of substrate or product between the active site and the solvent. Alternatively, the B site may bind allosteric effectors.</text>
</comment>
<comment type="similarity">
    <text evidence="1">Belongs to the class-II fumarase/aspartase family. Fumarase subfamily.</text>
</comment>
<organism>
    <name type="scientific">Listeria monocytogenes serotype 4b (strain F2365)</name>
    <dbReference type="NCBI Taxonomy" id="265669"/>
    <lineage>
        <taxon>Bacteria</taxon>
        <taxon>Bacillati</taxon>
        <taxon>Bacillota</taxon>
        <taxon>Bacilli</taxon>
        <taxon>Bacillales</taxon>
        <taxon>Listeriaceae</taxon>
        <taxon>Listeria</taxon>
    </lineage>
</organism>
<gene>
    <name evidence="1" type="primary">fumC</name>
    <name type="ordered locus">LMOf2365_2258</name>
</gene>
<keyword id="KW-0963">Cytoplasm</keyword>
<keyword id="KW-0456">Lyase</keyword>
<keyword id="KW-0816">Tricarboxylic acid cycle</keyword>
<name>FUMC_LISMF</name>
<proteinExistence type="inferred from homology"/>
<evidence type="ECO:0000255" key="1">
    <source>
        <dbReference type="HAMAP-Rule" id="MF_00743"/>
    </source>
</evidence>
<sequence>MERIERDTLGEISVDATKYWGAQTERSKRNFAIGDNPMPIEIIYAFAQLKKATAKVNAAEGKLSEEKAIAIGQVCDQIIQGELDEHFPLVVWQTGSGTQSNMNVNEVIAHVANLTLGEGQIHPNDDVNMSQSSNDTFPTAMHIAAYGALVTKLLPEITKMEAVLAEKKSKYMHLVKIGRTHLQDATPLTLGQEISGWEACLTNNKNYLETSMKAILPLAIGGTAVGTGLNASRDFGDKVAEELMKQTGYPFTSDSNKYFALTSHSPINFVHGSIRSLASDLMKIANDIRLLASGPRSGIGELTIPVNEPGSSIMPGKVNPTQCEAMTMVAAQVMGNDVTINVAASQGNFELNVYKPVIIFNFLESVKLLSDSMRSFRLHCLEGLTANEKVIETKVNDSLMLVTALNPHIGYEKAAKIAKLAFDENTTLKEAAIKTGFVTEKQFDLWIDPLKMTNL</sequence>
<feature type="chain" id="PRO_0000161285" description="Fumarate hydratase class II">
    <location>
        <begin position="1"/>
        <end position="455"/>
    </location>
</feature>
<feature type="active site" description="Proton donor/acceptor" evidence="1">
    <location>
        <position position="181"/>
    </location>
</feature>
<feature type="active site" evidence="1">
    <location>
        <position position="311"/>
    </location>
</feature>
<feature type="binding site" evidence="1">
    <location>
        <begin position="96"/>
        <end position="98"/>
    </location>
    <ligand>
        <name>substrate</name>
    </ligand>
</feature>
<feature type="binding site" description="in site B" evidence="1">
    <location>
        <begin position="122"/>
        <end position="125"/>
    </location>
    <ligand>
        <name>substrate</name>
    </ligand>
</feature>
<feature type="binding site" evidence="1">
    <location>
        <begin position="132"/>
        <end position="134"/>
    </location>
    <ligand>
        <name>substrate</name>
    </ligand>
</feature>
<feature type="binding site" evidence="1">
    <location>
        <position position="180"/>
    </location>
    <ligand>
        <name>substrate</name>
    </ligand>
</feature>
<feature type="binding site" evidence="1">
    <location>
        <position position="312"/>
    </location>
    <ligand>
        <name>substrate</name>
    </ligand>
</feature>
<feature type="binding site" evidence="1">
    <location>
        <begin position="317"/>
        <end position="319"/>
    </location>
    <ligand>
        <name>substrate</name>
    </ligand>
</feature>
<feature type="site" description="Important for catalytic activity" evidence="1">
    <location>
        <position position="324"/>
    </location>
</feature>
<protein>
    <recommendedName>
        <fullName evidence="1">Fumarate hydratase class II</fullName>
        <shortName evidence="1">Fumarase C</shortName>
        <ecNumber evidence="1">4.2.1.2</ecNumber>
    </recommendedName>
    <alternativeName>
        <fullName evidence="1">Aerobic fumarase</fullName>
    </alternativeName>
    <alternativeName>
        <fullName evidence="1">Iron-independent fumarase</fullName>
    </alternativeName>
</protein>
<accession>Q71XE0</accession>
<dbReference type="EC" id="4.2.1.2" evidence="1"/>
<dbReference type="EMBL" id="AE017262">
    <property type="protein sequence ID" value="AAT05025.1"/>
    <property type="molecule type" value="Genomic_DNA"/>
</dbReference>
<dbReference type="RefSeq" id="WP_010959021.1">
    <property type="nucleotide sequence ID" value="NC_002973.6"/>
</dbReference>
<dbReference type="SMR" id="Q71XE0"/>
<dbReference type="KEGG" id="lmf:LMOf2365_2258"/>
<dbReference type="HOGENOM" id="CLU_021594_4_1_9"/>
<dbReference type="UniPathway" id="UPA00223">
    <property type="reaction ID" value="UER01007"/>
</dbReference>
<dbReference type="GO" id="GO:0005737">
    <property type="term" value="C:cytoplasm"/>
    <property type="evidence" value="ECO:0007669"/>
    <property type="project" value="UniProtKB-SubCell"/>
</dbReference>
<dbReference type="GO" id="GO:0004333">
    <property type="term" value="F:fumarate hydratase activity"/>
    <property type="evidence" value="ECO:0007669"/>
    <property type="project" value="UniProtKB-UniRule"/>
</dbReference>
<dbReference type="GO" id="GO:0006106">
    <property type="term" value="P:fumarate metabolic process"/>
    <property type="evidence" value="ECO:0007669"/>
    <property type="project" value="InterPro"/>
</dbReference>
<dbReference type="GO" id="GO:0006108">
    <property type="term" value="P:malate metabolic process"/>
    <property type="evidence" value="ECO:0007669"/>
    <property type="project" value="TreeGrafter"/>
</dbReference>
<dbReference type="GO" id="GO:0006099">
    <property type="term" value="P:tricarboxylic acid cycle"/>
    <property type="evidence" value="ECO:0007669"/>
    <property type="project" value="UniProtKB-UniRule"/>
</dbReference>
<dbReference type="CDD" id="cd01362">
    <property type="entry name" value="Fumarase_classII"/>
    <property type="match status" value="1"/>
</dbReference>
<dbReference type="FunFam" id="1.10.40.30:FF:000002">
    <property type="entry name" value="Fumarate hydratase class II"/>
    <property type="match status" value="1"/>
</dbReference>
<dbReference type="FunFam" id="1.10.275.10:FF:000001">
    <property type="entry name" value="Fumarate hydratase, mitochondrial"/>
    <property type="match status" value="1"/>
</dbReference>
<dbReference type="FunFam" id="1.20.200.10:FF:000001">
    <property type="entry name" value="Fumarate hydratase, mitochondrial"/>
    <property type="match status" value="1"/>
</dbReference>
<dbReference type="Gene3D" id="1.10.40.30">
    <property type="entry name" value="Fumarase/aspartase (C-terminal domain)"/>
    <property type="match status" value="1"/>
</dbReference>
<dbReference type="Gene3D" id="1.20.200.10">
    <property type="entry name" value="Fumarase/aspartase (Central domain)"/>
    <property type="match status" value="1"/>
</dbReference>
<dbReference type="Gene3D" id="1.10.275.10">
    <property type="entry name" value="Fumarase/aspartase (N-terminal domain)"/>
    <property type="match status" value="1"/>
</dbReference>
<dbReference type="HAMAP" id="MF_00743">
    <property type="entry name" value="FumaraseC"/>
    <property type="match status" value="1"/>
</dbReference>
<dbReference type="InterPro" id="IPR005677">
    <property type="entry name" value="Fum_hydII"/>
</dbReference>
<dbReference type="InterPro" id="IPR024083">
    <property type="entry name" value="Fumarase/histidase_N"/>
</dbReference>
<dbReference type="InterPro" id="IPR018951">
    <property type="entry name" value="Fumarase_C_C"/>
</dbReference>
<dbReference type="InterPro" id="IPR020557">
    <property type="entry name" value="Fumarate_lyase_CS"/>
</dbReference>
<dbReference type="InterPro" id="IPR000362">
    <property type="entry name" value="Fumarate_lyase_fam"/>
</dbReference>
<dbReference type="InterPro" id="IPR022761">
    <property type="entry name" value="Fumarate_lyase_N"/>
</dbReference>
<dbReference type="InterPro" id="IPR008948">
    <property type="entry name" value="L-Aspartase-like"/>
</dbReference>
<dbReference type="NCBIfam" id="TIGR00979">
    <property type="entry name" value="fumC_II"/>
    <property type="match status" value="1"/>
</dbReference>
<dbReference type="PANTHER" id="PTHR11444">
    <property type="entry name" value="ASPARTATEAMMONIA/ARGININOSUCCINATE/ADENYLOSUCCINATE LYASE"/>
    <property type="match status" value="1"/>
</dbReference>
<dbReference type="PANTHER" id="PTHR11444:SF1">
    <property type="entry name" value="FUMARATE HYDRATASE, MITOCHONDRIAL"/>
    <property type="match status" value="1"/>
</dbReference>
<dbReference type="Pfam" id="PF10415">
    <property type="entry name" value="FumaraseC_C"/>
    <property type="match status" value="1"/>
</dbReference>
<dbReference type="Pfam" id="PF00206">
    <property type="entry name" value="Lyase_1"/>
    <property type="match status" value="1"/>
</dbReference>
<dbReference type="PRINTS" id="PR00149">
    <property type="entry name" value="FUMRATELYASE"/>
</dbReference>
<dbReference type="SUPFAM" id="SSF48557">
    <property type="entry name" value="L-aspartase-like"/>
    <property type="match status" value="1"/>
</dbReference>
<dbReference type="PROSITE" id="PS00163">
    <property type="entry name" value="FUMARATE_LYASES"/>
    <property type="match status" value="1"/>
</dbReference>
<reference key="1">
    <citation type="journal article" date="2004" name="Nucleic Acids Res.">
        <title>Whole genome comparisons of serotype 4b and 1/2a strains of the food-borne pathogen Listeria monocytogenes reveal new insights into the core genome components of this species.</title>
        <authorList>
            <person name="Nelson K.E."/>
            <person name="Fouts D.E."/>
            <person name="Mongodin E.F."/>
            <person name="Ravel J."/>
            <person name="DeBoy R.T."/>
            <person name="Kolonay J.F."/>
            <person name="Rasko D.A."/>
            <person name="Angiuoli S.V."/>
            <person name="Gill S.R."/>
            <person name="Paulsen I.T."/>
            <person name="Peterson J.D."/>
            <person name="White O."/>
            <person name="Nelson W.C."/>
            <person name="Nierman W.C."/>
            <person name="Beanan M.J."/>
            <person name="Brinkac L.M."/>
            <person name="Daugherty S.C."/>
            <person name="Dodson R.J."/>
            <person name="Durkin A.S."/>
            <person name="Madupu R."/>
            <person name="Haft D.H."/>
            <person name="Selengut J."/>
            <person name="Van Aken S.E."/>
            <person name="Khouri H.M."/>
            <person name="Fedorova N."/>
            <person name="Forberger H.A."/>
            <person name="Tran B."/>
            <person name="Kathariou S."/>
            <person name="Wonderling L.D."/>
            <person name="Uhlich G.A."/>
            <person name="Bayles D.O."/>
            <person name="Luchansky J.B."/>
            <person name="Fraser C.M."/>
        </authorList>
    </citation>
    <scope>NUCLEOTIDE SEQUENCE [LARGE SCALE GENOMIC DNA]</scope>
    <source>
        <strain>F2365</strain>
    </source>
</reference>